<evidence type="ECO:0000255" key="1">
    <source>
        <dbReference type="HAMAP-Rule" id="MF_01017"/>
    </source>
</evidence>
<reference key="1">
    <citation type="journal article" date="2001" name="Proc. Natl. Acad. Sci. U.S.A.">
        <title>Nucleotide sequence and predicted functions of the entire Sinorhizobium meliloti pSymA megaplasmid.</title>
        <authorList>
            <person name="Barnett M.J."/>
            <person name="Fisher R.F."/>
            <person name="Jones T."/>
            <person name="Komp C."/>
            <person name="Abola A.P."/>
            <person name="Barloy-Hubler F."/>
            <person name="Bowser L."/>
            <person name="Capela D."/>
            <person name="Galibert F."/>
            <person name="Gouzy J."/>
            <person name="Gurjal M."/>
            <person name="Hong A."/>
            <person name="Huizar L."/>
            <person name="Hyman R.W."/>
            <person name="Kahn D."/>
            <person name="Kahn M.L."/>
            <person name="Kalman S."/>
            <person name="Keating D.H."/>
            <person name="Palm C."/>
            <person name="Peck M.C."/>
            <person name="Surzycki R."/>
            <person name="Wells D.H."/>
            <person name="Yeh K.-C."/>
            <person name="Davis R.W."/>
            <person name="Federspiel N.A."/>
            <person name="Long S.R."/>
        </authorList>
    </citation>
    <scope>NUCLEOTIDE SEQUENCE [LARGE SCALE GENOMIC DNA]</scope>
    <source>
        <strain>1021</strain>
    </source>
</reference>
<reference key="2">
    <citation type="journal article" date="2001" name="Science">
        <title>The composite genome of the legume symbiont Sinorhizobium meliloti.</title>
        <authorList>
            <person name="Galibert F."/>
            <person name="Finan T.M."/>
            <person name="Long S.R."/>
            <person name="Puehler A."/>
            <person name="Abola P."/>
            <person name="Ampe F."/>
            <person name="Barloy-Hubler F."/>
            <person name="Barnett M.J."/>
            <person name="Becker A."/>
            <person name="Boistard P."/>
            <person name="Bothe G."/>
            <person name="Boutry M."/>
            <person name="Bowser L."/>
            <person name="Buhrmester J."/>
            <person name="Cadieu E."/>
            <person name="Capela D."/>
            <person name="Chain P."/>
            <person name="Cowie A."/>
            <person name="Davis R.W."/>
            <person name="Dreano S."/>
            <person name="Federspiel N.A."/>
            <person name="Fisher R.F."/>
            <person name="Gloux S."/>
            <person name="Godrie T."/>
            <person name="Goffeau A."/>
            <person name="Golding B."/>
            <person name="Gouzy J."/>
            <person name="Gurjal M."/>
            <person name="Hernandez-Lucas I."/>
            <person name="Hong A."/>
            <person name="Huizar L."/>
            <person name="Hyman R.W."/>
            <person name="Jones T."/>
            <person name="Kahn D."/>
            <person name="Kahn M.L."/>
            <person name="Kalman S."/>
            <person name="Keating D.H."/>
            <person name="Kiss E."/>
            <person name="Komp C."/>
            <person name="Lelaure V."/>
            <person name="Masuy D."/>
            <person name="Palm C."/>
            <person name="Peck M.C."/>
            <person name="Pohl T.M."/>
            <person name="Portetelle D."/>
            <person name="Purnelle B."/>
            <person name="Ramsperger U."/>
            <person name="Surzycki R."/>
            <person name="Thebault P."/>
            <person name="Vandenbol M."/>
            <person name="Vorhoelter F.J."/>
            <person name="Weidner S."/>
            <person name="Wells D.H."/>
            <person name="Wong K."/>
            <person name="Yeh K.-C."/>
            <person name="Batut J."/>
        </authorList>
    </citation>
    <scope>NUCLEOTIDE SEQUENCE [LARGE SCALE GENOMIC DNA]</scope>
    <source>
        <strain>1021</strain>
    </source>
</reference>
<geneLocation type="plasmid">
    <name>pSymA</name>
    <name>megaplasmid 1</name>
</geneLocation>
<keyword id="KW-0285">Flavoprotein</keyword>
<keyword id="KW-0288">FMN</keyword>
<keyword id="KW-0520">NAD</keyword>
<keyword id="KW-0521">NADP</keyword>
<keyword id="KW-0547">Nucleotide-binding</keyword>
<keyword id="KW-0560">Oxidoreductase</keyword>
<keyword id="KW-0614">Plasmid</keyword>
<keyword id="KW-1185">Reference proteome</keyword>
<organism>
    <name type="scientific">Rhizobium meliloti (strain 1021)</name>
    <name type="common">Ensifer meliloti</name>
    <name type="synonym">Sinorhizobium meliloti</name>
    <dbReference type="NCBI Taxonomy" id="266834"/>
    <lineage>
        <taxon>Bacteria</taxon>
        <taxon>Pseudomonadati</taxon>
        <taxon>Pseudomonadota</taxon>
        <taxon>Alphaproteobacteria</taxon>
        <taxon>Hyphomicrobiales</taxon>
        <taxon>Rhizobiaceae</taxon>
        <taxon>Sinorhizobium/Ensifer group</taxon>
        <taxon>Sinorhizobium</taxon>
    </lineage>
</organism>
<gene>
    <name type="ordered locus">RA0183</name>
    <name type="ORF">SMa0340</name>
</gene>
<comment type="catalytic activity">
    <reaction evidence="1">
        <text>a quinone + NADH + H(+) = a quinol + NAD(+)</text>
        <dbReference type="Rhea" id="RHEA:46160"/>
        <dbReference type="ChEBI" id="CHEBI:15378"/>
        <dbReference type="ChEBI" id="CHEBI:24646"/>
        <dbReference type="ChEBI" id="CHEBI:57540"/>
        <dbReference type="ChEBI" id="CHEBI:57945"/>
        <dbReference type="ChEBI" id="CHEBI:132124"/>
        <dbReference type="EC" id="1.6.5.2"/>
    </reaction>
</comment>
<comment type="catalytic activity">
    <reaction evidence="1">
        <text>a quinone + NADPH + H(+) = a quinol + NADP(+)</text>
        <dbReference type="Rhea" id="RHEA:46164"/>
        <dbReference type="ChEBI" id="CHEBI:15378"/>
        <dbReference type="ChEBI" id="CHEBI:24646"/>
        <dbReference type="ChEBI" id="CHEBI:57783"/>
        <dbReference type="ChEBI" id="CHEBI:58349"/>
        <dbReference type="ChEBI" id="CHEBI:132124"/>
        <dbReference type="EC" id="1.6.5.2"/>
    </reaction>
</comment>
<comment type="cofactor">
    <cofactor evidence="1">
        <name>FMN</name>
        <dbReference type="ChEBI" id="CHEBI:58210"/>
    </cofactor>
    <text evidence="1">Binds 1 FMN per monomer.</text>
</comment>
<comment type="similarity">
    <text evidence="1">Belongs to the WrbA family.</text>
</comment>
<dbReference type="EC" id="1.6.5.2" evidence="1"/>
<dbReference type="EMBL" id="AE006469">
    <property type="protein sequence ID" value="AAK64841.1"/>
    <property type="molecule type" value="Genomic_DNA"/>
</dbReference>
<dbReference type="PIR" id="G95284">
    <property type="entry name" value="G95284"/>
</dbReference>
<dbReference type="RefSeq" id="NP_435429.1">
    <property type="nucleotide sequence ID" value="NC_003037.1"/>
</dbReference>
<dbReference type="SMR" id="Q930L2"/>
<dbReference type="EnsemblBacteria" id="AAK64841">
    <property type="protein sequence ID" value="AAK64841"/>
    <property type="gene ID" value="SMa0340"/>
</dbReference>
<dbReference type="KEGG" id="sme:SMa0340"/>
<dbReference type="PATRIC" id="fig|266834.11.peg.188"/>
<dbReference type="HOGENOM" id="CLU_051402_0_2_5"/>
<dbReference type="OrthoDB" id="9801479at2"/>
<dbReference type="Proteomes" id="UP000001976">
    <property type="component" value="Plasmid pSymA"/>
</dbReference>
<dbReference type="GO" id="GO:0016020">
    <property type="term" value="C:membrane"/>
    <property type="evidence" value="ECO:0007669"/>
    <property type="project" value="TreeGrafter"/>
</dbReference>
<dbReference type="GO" id="GO:0050660">
    <property type="term" value="F:flavin adenine dinucleotide binding"/>
    <property type="evidence" value="ECO:0007669"/>
    <property type="project" value="UniProtKB-UniRule"/>
</dbReference>
<dbReference type="GO" id="GO:0010181">
    <property type="term" value="F:FMN binding"/>
    <property type="evidence" value="ECO:0007669"/>
    <property type="project" value="InterPro"/>
</dbReference>
<dbReference type="GO" id="GO:0051287">
    <property type="term" value="F:NAD binding"/>
    <property type="evidence" value="ECO:0007669"/>
    <property type="project" value="UniProtKB-UniRule"/>
</dbReference>
<dbReference type="GO" id="GO:0050136">
    <property type="term" value="F:NADH:ubiquinone reductase (non-electrogenic) activity"/>
    <property type="evidence" value="ECO:0007669"/>
    <property type="project" value="RHEA"/>
</dbReference>
<dbReference type="GO" id="GO:0050661">
    <property type="term" value="F:NADP binding"/>
    <property type="evidence" value="ECO:0007669"/>
    <property type="project" value="UniProtKB-UniRule"/>
</dbReference>
<dbReference type="GO" id="GO:0008753">
    <property type="term" value="F:NADPH dehydrogenase (quinone) activity"/>
    <property type="evidence" value="ECO:0007669"/>
    <property type="project" value="RHEA"/>
</dbReference>
<dbReference type="FunFam" id="3.40.50.360:FF:000001">
    <property type="entry name" value="NAD(P)H dehydrogenase (Quinone) FQR1-like"/>
    <property type="match status" value="1"/>
</dbReference>
<dbReference type="Gene3D" id="3.40.50.360">
    <property type="match status" value="1"/>
</dbReference>
<dbReference type="HAMAP" id="MF_01017">
    <property type="entry name" value="NQOR"/>
    <property type="match status" value="1"/>
</dbReference>
<dbReference type="InterPro" id="IPR008254">
    <property type="entry name" value="Flavodoxin/NO_synth"/>
</dbReference>
<dbReference type="InterPro" id="IPR029039">
    <property type="entry name" value="Flavoprotein-like_sf"/>
</dbReference>
<dbReference type="InterPro" id="IPR010089">
    <property type="entry name" value="Flavoprotein_WrbA-like"/>
</dbReference>
<dbReference type="InterPro" id="IPR005025">
    <property type="entry name" value="FMN_Rdtase-like_dom"/>
</dbReference>
<dbReference type="InterPro" id="IPR037513">
    <property type="entry name" value="NQO"/>
</dbReference>
<dbReference type="NCBIfam" id="TIGR01755">
    <property type="entry name" value="flav_wrbA"/>
    <property type="match status" value="1"/>
</dbReference>
<dbReference type="NCBIfam" id="NF002999">
    <property type="entry name" value="PRK03767.1"/>
    <property type="match status" value="1"/>
</dbReference>
<dbReference type="PANTHER" id="PTHR30546">
    <property type="entry name" value="FLAVODOXIN-RELATED PROTEIN WRBA-RELATED"/>
    <property type="match status" value="1"/>
</dbReference>
<dbReference type="PANTHER" id="PTHR30546:SF23">
    <property type="entry name" value="FLAVOPROTEIN-LIKE PROTEIN YCP4-RELATED"/>
    <property type="match status" value="1"/>
</dbReference>
<dbReference type="Pfam" id="PF03358">
    <property type="entry name" value="FMN_red"/>
    <property type="match status" value="1"/>
</dbReference>
<dbReference type="SUPFAM" id="SSF52218">
    <property type="entry name" value="Flavoproteins"/>
    <property type="match status" value="1"/>
</dbReference>
<dbReference type="PROSITE" id="PS50902">
    <property type="entry name" value="FLAVODOXIN_LIKE"/>
    <property type="match status" value="1"/>
</dbReference>
<sequence>MTRVLVLYYSSYGHIETMAGAVAEGARSTGAEVTIKRVPETVPIEVADKAHFKLNQAAPVATVAELADYDAIIVGTGTRFGRMSSQMAVFLDQAGGLWARGALNGKVGGAFVSTGTQHGGQETTLFSIITNLMHFGMVIVGLPYSHQGQMSVDEIVGGAPYGATTVAGGDGSRQPSQIDLAGAFHQGEIVARTAAALVAARN</sequence>
<name>NQOR2_RHIME</name>
<accession>Q930L2</accession>
<proteinExistence type="inferred from homology"/>
<feature type="chain" id="PRO_0000200752" description="NAD(P)H dehydrogenase (quinone) 2">
    <location>
        <begin position="1"/>
        <end position="202"/>
    </location>
</feature>
<feature type="domain" description="Flavodoxin-like" evidence="1">
    <location>
        <begin position="4"/>
        <end position="190"/>
    </location>
</feature>
<feature type="binding site" evidence="1">
    <location>
        <begin position="10"/>
        <end position="15"/>
    </location>
    <ligand>
        <name>FMN</name>
        <dbReference type="ChEBI" id="CHEBI:58210"/>
    </ligand>
</feature>
<feature type="binding site" evidence="1">
    <location>
        <position position="12"/>
    </location>
    <ligand>
        <name>NAD(+)</name>
        <dbReference type="ChEBI" id="CHEBI:57540"/>
    </ligand>
</feature>
<feature type="binding site" evidence="1">
    <location>
        <begin position="78"/>
        <end position="80"/>
    </location>
    <ligand>
        <name>FMN</name>
        <dbReference type="ChEBI" id="CHEBI:58210"/>
    </ligand>
</feature>
<feature type="binding site" evidence="1">
    <location>
        <position position="98"/>
    </location>
    <ligand>
        <name>substrate</name>
    </ligand>
</feature>
<feature type="binding site" evidence="1">
    <location>
        <begin position="113"/>
        <end position="119"/>
    </location>
    <ligand>
        <name>FMN</name>
        <dbReference type="ChEBI" id="CHEBI:58210"/>
    </ligand>
</feature>
<feature type="binding site" evidence="1">
    <location>
        <position position="134"/>
    </location>
    <ligand>
        <name>FMN</name>
        <dbReference type="ChEBI" id="CHEBI:58210"/>
    </ligand>
</feature>
<protein>
    <recommendedName>
        <fullName evidence="1">NAD(P)H dehydrogenase (quinone) 2</fullName>
        <ecNumber evidence="1">1.6.5.2</ecNumber>
    </recommendedName>
    <alternativeName>
        <fullName>Flavoprotein WrbA 2</fullName>
    </alternativeName>
    <alternativeName>
        <fullName evidence="1">NAD(P)H:quinone oxidoreductase 2</fullName>
        <shortName evidence="1">NQO 2</shortName>
    </alternativeName>
</protein>